<dbReference type="EC" id="6.1.1.21" evidence="1"/>
<dbReference type="EMBL" id="AE016827">
    <property type="protein sequence ID" value="AAU38527.1"/>
    <property type="molecule type" value="Genomic_DNA"/>
</dbReference>
<dbReference type="RefSeq" id="WP_011201080.1">
    <property type="nucleotide sequence ID" value="NC_006300.1"/>
</dbReference>
<dbReference type="SMR" id="Q65R83"/>
<dbReference type="STRING" id="221988.MS1920"/>
<dbReference type="KEGG" id="msu:MS1920"/>
<dbReference type="eggNOG" id="COG0124">
    <property type="taxonomic scope" value="Bacteria"/>
</dbReference>
<dbReference type="HOGENOM" id="CLU_025113_1_1_6"/>
<dbReference type="OrthoDB" id="9800814at2"/>
<dbReference type="Proteomes" id="UP000000607">
    <property type="component" value="Chromosome"/>
</dbReference>
<dbReference type="GO" id="GO:0005737">
    <property type="term" value="C:cytoplasm"/>
    <property type="evidence" value="ECO:0007669"/>
    <property type="project" value="UniProtKB-SubCell"/>
</dbReference>
<dbReference type="GO" id="GO:0005524">
    <property type="term" value="F:ATP binding"/>
    <property type="evidence" value="ECO:0007669"/>
    <property type="project" value="UniProtKB-UniRule"/>
</dbReference>
<dbReference type="GO" id="GO:0004821">
    <property type="term" value="F:histidine-tRNA ligase activity"/>
    <property type="evidence" value="ECO:0007669"/>
    <property type="project" value="UniProtKB-UniRule"/>
</dbReference>
<dbReference type="GO" id="GO:0006427">
    <property type="term" value="P:histidyl-tRNA aminoacylation"/>
    <property type="evidence" value="ECO:0007669"/>
    <property type="project" value="UniProtKB-UniRule"/>
</dbReference>
<dbReference type="CDD" id="cd00773">
    <property type="entry name" value="HisRS-like_core"/>
    <property type="match status" value="1"/>
</dbReference>
<dbReference type="CDD" id="cd00859">
    <property type="entry name" value="HisRS_anticodon"/>
    <property type="match status" value="1"/>
</dbReference>
<dbReference type="FunFam" id="3.30.930.10:FF:000005">
    <property type="entry name" value="Histidine--tRNA ligase"/>
    <property type="match status" value="1"/>
</dbReference>
<dbReference type="FunFam" id="3.40.50.800:FF:000007">
    <property type="entry name" value="Histidine--tRNA ligase"/>
    <property type="match status" value="1"/>
</dbReference>
<dbReference type="Gene3D" id="3.40.50.800">
    <property type="entry name" value="Anticodon-binding domain"/>
    <property type="match status" value="1"/>
</dbReference>
<dbReference type="Gene3D" id="3.30.930.10">
    <property type="entry name" value="Bira Bifunctional Protein, Domain 2"/>
    <property type="match status" value="1"/>
</dbReference>
<dbReference type="HAMAP" id="MF_00127">
    <property type="entry name" value="His_tRNA_synth"/>
    <property type="match status" value="1"/>
</dbReference>
<dbReference type="InterPro" id="IPR006195">
    <property type="entry name" value="aa-tRNA-synth_II"/>
</dbReference>
<dbReference type="InterPro" id="IPR045864">
    <property type="entry name" value="aa-tRNA-synth_II/BPL/LPL"/>
</dbReference>
<dbReference type="InterPro" id="IPR004154">
    <property type="entry name" value="Anticodon-bd"/>
</dbReference>
<dbReference type="InterPro" id="IPR036621">
    <property type="entry name" value="Anticodon-bd_dom_sf"/>
</dbReference>
<dbReference type="InterPro" id="IPR015807">
    <property type="entry name" value="His-tRNA-ligase"/>
</dbReference>
<dbReference type="InterPro" id="IPR041715">
    <property type="entry name" value="HisRS-like_core"/>
</dbReference>
<dbReference type="InterPro" id="IPR004516">
    <property type="entry name" value="HisRS/HisZ"/>
</dbReference>
<dbReference type="InterPro" id="IPR033656">
    <property type="entry name" value="HisRS_anticodon"/>
</dbReference>
<dbReference type="NCBIfam" id="TIGR00442">
    <property type="entry name" value="hisS"/>
    <property type="match status" value="1"/>
</dbReference>
<dbReference type="PANTHER" id="PTHR43707:SF1">
    <property type="entry name" value="HISTIDINE--TRNA LIGASE, MITOCHONDRIAL-RELATED"/>
    <property type="match status" value="1"/>
</dbReference>
<dbReference type="PANTHER" id="PTHR43707">
    <property type="entry name" value="HISTIDYL-TRNA SYNTHETASE"/>
    <property type="match status" value="1"/>
</dbReference>
<dbReference type="Pfam" id="PF03129">
    <property type="entry name" value="HGTP_anticodon"/>
    <property type="match status" value="1"/>
</dbReference>
<dbReference type="Pfam" id="PF13393">
    <property type="entry name" value="tRNA-synt_His"/>
    <property type="match status" value="1"/>
</dbReference>
<dbReference type="PIRSF" id="PIRSF001549">
    <property type="entry name" value="His-tRNA_synth"/>
    <property type="match status" value="1"/>
</dbReference>
<dbReference type="SUPFAM" id="SSF52954">
    <property type="entry name" value="Class II aaRS ABD-related"/>
    <property type="match status" value="1"/>
</dbReference>
<dbReference type="SUPFAM" id="SSF55681">
    <property type="entry name" value="Class II aaRS and biotin synthetases"/>
    <property type="match status" value="1"/>
</dbReference>
<dbReference type="PROSITE" id="PS50862">
    <property type="entry name" value="AA_TRNA_LIGASE_II"/>
    <property type="match status" value="1"/>
</dbReference>
<evidence type="ECO:0000255" key="1">
    <source>
        <dbReference type="HAMAP-Rule" id="MF_00127"/>
    </source>
</evidence>
<gene>
    <name evidence="1" type="primary">hisS</name>
    <name type="ordered locus">MS1920</name>
</gene>
<proteinExistence type="inferred from homology"/>
<keyword id="KW-0030">Aminoacyl-tRNA synthetase</keyword>
<keyword id="KW-0067">ATP-binding</keyword>
<keyword id="KW-0963">Cytoplasm</keyword>
<keyword id="KW-0436">Ligase</keyword>
<keyword id="KW-0547">Nucleotide-binding</keyword>
<keyword id="KW-0648">Protein biosynthesis</keyword>
<organism>
    <name type="scientific">Mannheimia succiniciproducens (strain KCTC 0769BP / MBEL55E)</name>
    <dbReference type="NCBI Taxonomy" id="221988"/>
    <lineage>
        <taxon>Bacteria</taxon>
        <taxon>Pseudomonadati</taxon>
        <taxon>Pseudomonadota</taxon>
        <taxon>Gammaproteobacteria</taxon>
        <taxon>Pasteurellales</taxon>
        <taxon>Pasteurellaceae</taxon>
        <taxon>Basfia</taxon>
    </lineage>
</organism>
<sequence length="427" mass="47829">MAKTIQAIRGMNDCLPTETPVWQWVESKVRSTLASYGYSEIRMPIVENTPLFARAIGEVTDVVSKEMFTFNDRDNESLTLRPEGTAGCVRAGIEHGLLYNQEQRLWYMGPMFRYERPQKGRYRQFHQAGVEVFGIANAEIDAELIILTARLWKELGIEQHVTLQLNSIGSLEARANYRSALVEFLQQYVGLMNEEEKERLLKNPLRILDTKNEALQQALNNAPKLLDYLDDDSREHFARLCAILDNVGISYEINPKLVRGLDYYNKTVFEWVTTALGAQGTICGGGRYDGLVEQLGGHATCGVGFAMGLERLILLVQEVNKAIPLPQSAVDIYLIFAGENTASAAFRLAEKVRSELPHLRTMMHCSGGNFKKQFKRADKSGAKIALVLGESEVQNQQVVVKDLLGGAEQQTVALEAVIDHLKTSFKE</sequence>
<reference key="1">
    <citation type="journal article" date="2004" name="Nat. Biotechnol.">
        <title>The genome sequence of the capnophilic rumen bacterium Mannheimia succiniciproducens.</title>
        <authorList>
            <person name="Hong S.H."/>
            <person name="Kim J.S."/>
            <person name="Lee S.Y."/>
            <person name="In Y.H."/>
            <person name="Choi S.S."/>
            <person name="Rih J.-K."/>
            <person name="Kim C.H."/>
            <person name="Jeong H."/>
            <person name="Hur C.G."/>
            <person name="Kim J.J."/>
        </authorList>
    </citation>
    <scope>NUCLEOTIDE SEQUENCE [LARGE SCALE GENOMIC DNA]</scope>
    <source>
        <strain>KCTC 0769BP / MBEL55E</strain>
    </source>
</reference>
<feature type="chain" id="PRO_0000136190" description="Histidine--tRNA ligase">
    <location>
        <begin position="1"/>
        <end position="427"/>
    </location>
</feature>
<comment type="catalytic activity">
    <reaction evidence="1">
        <text>tRNA(His) + L-histidine + ATP = L-histidyl-tRNA(His) + AMP + diphosphate + H(+)</text>
        <dbReference type="Rhea" id="RHEA:17313"/>
        <dbReference type="Rhea" id="RHEA-COMP:9665"/>
        <dbReference type="Rhea" id="RHEA-COMP:9689"/>
        <dbReference type="ChEBI" id="CHEBI:15378"/>
        <dbReference type="ChEBI" id="CHEBI:30616"/>
        <dbReference type="ChEBI" id="CHEBI:33019"/>
        <dbReference type="ChEBI" id="CHEBI:57595"/>
        <dbReference type="ChEBI" id="CHEBI:78442"/>
        <dbReference type="ChEBI" id="CHEBI:78527"/>
        <dbReference type="ChEBI" id="CHEBI:456215"/>
        <dbReference type="EC" id="6.1.1.21"/>
    </reaction>
</comment>
<comment type="subunit">
    <text evidence="1">Homodimer.</text>
</comment>
<comment type="subcellular location">
    <subcellularLocation>
        <location evidence="1">Cytoplasm</location>
    </subcellularLocation>
</comment>
<comment type="similarity">
    <text evidence="1">Belongs to the class-II aminoacyl-tRNA synthetase family.</text>
</comment>
<accession>Q65R83</accession>
<protein>
    <recommendedName>
        <fullName evidence="1">Histidine--tRNA ligase</fullName>
        <ecNumber evidence="1">6.1.1.21</ecNumber>
    </recommendedName>
    <alternativeName>
        <fullName evidence="1">Histidyl-tRNA synthetase</fullName>
        <shortName evidence="1">HisRS</shortName>
    </alternativeName>
</protein>
<name>SYH_MANSM</name>